<name>IF2P_METAC</name>
<evidence type="ECO:0000250" key="1"/>
<evidence type="ECO:0000255" key="2">
    <source>
        <dbReference type="HAMAP-Rule" id="MF_00100"/>
    </source>
</evidence>
<accession>Q8TQL5</accession>
<sequence length="597" mass="65438">MREVLYMTDKKNLRTPIVCVMGHVDHGKTTLLDKIRGTAIVSGEAGAITQHIGATEVPIDVIVNKLGDPKLRDRFMVPGLLFIDTPGHHAFTTLRSRGGALADLAIVVVDINEGFKPQTYESLQILKRFKTPFVVVANKIDRIGGWASQKDMPFAATFKKQSPDVQGRLETKLYEVIGELYNQGFAAERYDRVTNFQKTLGVVPASAVTGEGIPDVLMVLLGLAQKFLEANLQYSAKNPGVGTVLEVKEEKGLGATLDVILYDGTLKKGDTVVIGSLGEPIQTKVRALLKPRELSEIRYESKFKQVSEVTAAAGVKISAPGLDGALAGSPIRVATEETLGEIVAQVKSEIDEVRIDTGSVGVMIKADTLGSLEALVHEFQKDEVPIRKAEVGDISHRDAVEASTVEDPLYSVLIGFNVKVHPDARDFLQESTVKVFTSDVIYRLVEDYQKYVKEQQELAEKKIFETIIRPGKFKILPGCVFRQSKPAVVGVRVLGGVVRTNADVMLENGNVVGKIKGLQSEGENIPSAKVGKEVAMAIEGATVGRQIKEEDVLYINVPERHAKVLEHEIYDSLSTDEKETLDIFLTLKRKNNPFWAK</sequence>
<protein>
    <recommendedName>
        <fullName evidence="2">Probable translation initiation factor IF-2</fullName>
    </recommendedName>
</protein>
<proteinExistence type="inferred from homology"/>
<dbReference type="EMBL" id="AE010299">
    <property type="protein sequence ID" value="AAM04939.1"/>
    <property type="molecule type" value="Genomic_DNA"/>
</dbReference>
<dbReference type="SMR" id="Q8TQL5"/>
<dbReference type="STRING" id="188937.MA_1525"/>
<dbReference type="EnsemblBacteria" id="AAM04939">
    <property type="protein sequence ID" value="AAM04939"/>
    <property type="gene ID" value="MA_1525"/>
</dbReference>
<dbReference type="KEGG" id="mac:MA_1525"/>
<dbReference type="HOGENOM" id="CLU_002656_3_3_2"/>
<dbReference type="InParanoid" id="Q8TQL5"/>
<dbReference type="PhylomeDB" id="Q8TQL5"/>
<dbReference type="Proteomes" id="UP000002487">
    <property type="component" value="Chromosome"/>
</dbReference>
<dbReference type="GO" id="GO:0005737">
    <property type="term" value="C:cytoplasm"/>
    <property type="evidence" value="ECO:0000318"/>
    <property type="project" value="GO_Central"/>
</dbReference>
<dbReference type="GO" id="GO:0005525">
    <property type="term" value="F:GTP binding"/>
    <property type="evidence" value="ECO:0007669"/>
    <property type="project" value="UniProtKB-KW"/>
</dbReference>
<dbReference type="GO" id="GO:0003924">
    <property type="term" value="F:GTPase activity"/>
    <property type="evidence" value="ECO:0007669"/>
    <property type="project" value="UniProtKB-UniRule"/>
</dbReference>
<dbReference type="GO" id="GO:0003743">
    <property type="term" value="F:translation initiation factor activity"/>
    <property type="evidence" value="ECO:0000318"/>
    <property type="project" value="GO_Central"/>
</dbReference>
<dbReference type="GO" id="GO:0006413">
    <property type="term" value="P:translational initiation"/>
    <property type="evidence" value="ECO:0000318"/>
    <property type="project" value="GO_Central"/>
</dbReference>
<dbReference type="CDD" id="cd03703">
    <property type="entry name" value="aeIF5B_II"/>
    <property type="match status" value="1"/>
</dbReference>
<dbReference type="CDD" id="cd16266">
    <property type="entry name" value="IF2_aeIF5B_IV"/>
    <property type="match status" value="1"/>
</dbReference>
<dbReference type="CDD" id="cd01887">
    <property type="entry name" value="IF2_eIF5B"/>
    <property type="match status" value="1"/>
</dbReference>
<dbReference type="FunFam" id="3.40.50.300:FF:000112">
    <property type="entry name" value="Eukaryotic translation initiation factor 5B"/>
    <property type="match status" value="1"/>
</dbReference>
<dbReference type="FunFam" id="2.40.30.10:FF:000013">
    <property type="entry name" value="eukaryotic translation initiation factor 5B"/>
    <property type="match status" value="1"/>
</dbReference>
<dbReference type="FunFam" id="2.40.30.10:FF:000152">
    <property type="entry name" value="Probable translation initiation factor IF-2"/>
    <property type="match status" value="1"/>
</dbReference>
<dbReference type="FunFam" id="3.40.50.10050:FF:000001">
    <property type="entry name" value="Translation initiation factor IF-2"/>
    <property type="match status" value="1"/>
</dbReference>
<dbReference type="Gene3D" id="3.40.50.300">
    <property type="entry name" value="P-loop containing nucleotide triphosphate hydrolases"/>
    <property type="match status" value="1"/>
</dbReference>
<dbReference type="Gene3D" id="2.40.30.10">
    <property type="entry name" value="Translation factors"/>
    <property type="match status" value="2"/>
</dbReference>
<dbReference type="Gene3D" id="3.40.50.10050">
    <property type="entry name" value="Translation initiation factor IF- 2, domain 3"/>
    <property type="match status" value="1"/>
</dbReference>
<dbReference type="HAMAP" id="MF_00100_A">
    <property type="entry name" value="IF_2_A"/>
    <property type="match status" value="1"/>
</dbReference>
<dbReference type="InterPro" id="IPR004161">
    <property type="entry name" value="EFTu-like_2"/>
</dbReference>
<dbReference type="InterPro" id="IPR029459">
    <property type="entry name" value="EFTU-type"/>
</dbReference>
<dbReference type="InterPro" id="IPR027417">
    <property type="entry name" value="P-loop_NTPase"/>
</dbReference>
<dbReference type="InterPro" id="IPR005225">
    <property type="entry name" value="Small_GTP-bd"/>
</dbReference>
<dbReference type="InterPro" id="IPR000795">
    <property type="entry name" value="T_Tr_GTP-bd_dom"/>
</dbReference>
<dbReference type="InterPro" id="IPR004544">
    <property type="entry name" value="TF_aIF-2_arc"/>
</dbReference>
<dbReference type="InterPro" id="IPR015760">
    <property type="entry name" value="TIF_IF2"/>
</dbReference>
<dbReference type="InterPro" id="IPR023115">
    <property type="entry name" value="TIF_IF2_dom3"/>
</dbReference>
<dbReference type="InterPro" id="IPR036925">
    <property type="entry name" value="TIF_IF2_dom3_sf"/>
</dbReference>
<dbReference type="InterPro" id="IPR009000">
    <property type="entry name" value="Transl_B-barrel_sf"/>
</dbReference>
<dbReference type="NCBIfam" id="TIGR00491">
    <property type="entry name" value="aIF-2"/>
    <property type="match status" value="1"/>
</dbReference>
<dbReference type="NCBIfam" id="NF003078">
    <property type="entry name" value="PRK04004.1"/>
    <property type="match status" value="1"/>
</dbReference>
<dbReference type="NCBIfam" id="NF011418">
    <property type="entry name" value="PRK14845.1"/>
    <property type="match status" value="1"/>
</dbReference>
<dbReference type="NCBIfam" id="TIGR00231">
    <property type="entry name" value="small_GTP"/>
    <property type="match status" value="1"/>
</dbReference>
<dbReference type="PANTHER" id="PTHR43381:SF4">
    <property type="entry name" value="EUKARYOTIC TRANSLATION INITIATION FACTOR 5B"/>
    <property type="match status" value="1"/>
</dbReference>
<dbReference type="PANTHER" id="PTHR43381">
    <property type="entry name" value="TRANSLATION INITIATION FACTOR IF-2-RELATED"/>
    <property type="match status" value="1"/>
</dbReference>
<dbReference type="Pfam" id="PF00009">
    <property type="entry name" value="GTP_EFTU"/>
    <property type="match status" value="1"/>
</dbReference>
<dbReference type="Pfam" id="PF03144">
    <property type="entry name" value="GTP_EFTU_D2"/>
    <property type="match status" value="1"/>
</dbReference>
<dbReference type="Pfam" id="PF14578">
    <property type="entry name" value="GTP_EFTU_D4"/>
    <property type="match status" value="1"/>
</dbReference>
<dbReference type="Pfam" id="PF11987">
    <property type="entry name" value="IF-2"/>
    <property type="match status" value="1"/>
</dbReference>
<dbReference type="PRINTS" id="PR00315">
    <property type="entry name" value="ELONGATNFCT"/>
</dbReference>
<dbReference type="SUPFAM" id="SSF52156">
    <property type="entry name" value="Initiation factor IF2/eIF5b, domain 3"/>
    <property type="match status" value="1"/>
</dbReference>
<dbReference type="SUPFAM" id="SSF52540">
    <property type="entry name" value="P-loop containing nucleoside triphosphate hydrolases"/>
    <property type="match status" value="1"/>
</dbReference>
<dbReference type="SUPFAM" id="SSF50447">
    <property type="entry name" value="Translation proteins"/>
    <property type="match status" value="1"/>
</dbReference>
<dbReference type="PROSITE" id="PS51722">
    <property type="entry name" value="G_TR_2"/>
    <property type="match status" value="1"/>
</dbReference>
<dbReference type="PROSITE" id="PS01176">
    <property type="entry name" value="IF2"/>
    <property type="match status" value="1"/>
</dbReference>
<keyword id="KW-0342">GTP-binding</keyword>
<keyword id="KW-0396">Initiation factor</keyword>
<keyword id="KW-0547">Nucleotide-binding</keyword>
<keyword id="KW-0648">Protein biosynthesis</keyword>
<keyword id="KW-1185">Reference proteome</keyword>
<gene>
    <name evidence="2" type="primary">infB</name>
    <name type="ordered locus">MA_1525</name>
</gene>
<organism>
    <name type="scientific">Methanosarcina acetivorans (strain ATCC 35395 / DSM 2834 / JCM 12185 / C2A)</name>
    <dbReference type="NCBI Taxonomy" id="188937"/>
    <lineage>
        <taxon>Archaea</taxon>
        <taxon>Methanobacteriati</taxon>
        <taxon>Methanobacteriota</taxon>
        <taxon>Stenosarchaea group</taxon>
        <taxon>Methanomicrobia</taxon>
        <taxon>Methanosarcinales</taxon>
        <taxon>Methanosarcinaceae</taxon>
        <taxon>Methanosarcina</taxon>
    </lineage>
</organism>
<comment type="function">
    <text evidence="2">Function in general translation initiation by promoting the binding of the formylmethionine-tRNA to ribosomes. Seems to function along with eIF-2.</text>
</comment>
<comment type="similarity">
    <text evidence="2">Belongs to the TRAFAC class translation factor GTPase superfamily. Classic translation factor GTPase family. IF-2 subfamily.</text>
</comment>
<reference key="1">
    <citation type="journal article" date="2002" name="Genome Res.">
        <title>The genome of Methanosarcina acetivorans reveals extensive metabolic and physiological diversity.</title>
        <authorList>
            <person name="Galagan J.E."/>
            <person name="Nusbaum C."/>
            <person name="Roy A."/>
            <person name="Endrizzi M.G."/>
            <person name="Macdonald P."/>
            <person name="FitzHugh W."/>
            <person name="Calvo S."/>
            <person name="Engels R."/>
            <person name="Smirnov S."/>
            <person name="Atnoor D."/>
            <person name="Brown A."/>
            <person name="Allen N."/>
            <person name="Naylor J."/>
            <person name="Stange-Thomann N."/>
            <person name="DeArellano K."/>
            <person name="Johnson R."/>
            <person name="Linton L."/>
            <person name="McEwan P."/>
            <person name="McKernan K."/>
            <person name="Talamas J."/>
            <person name="Tirrell A."/>
            <person name="Ye W."/>
            <person name="Zimmer A."/>
            <person name="Barber R.D."/>
            <person name="Cann I."/>
            <person name="Graham D.E."/>
            <person name="Grahame D.A."/>
            <person name="Guss A.M."/>
            <person name="Hedderich R."/>
            <person name="Ingram-Smith C."/>
            <person name="Kuettner H.C."/>
            <person name="Krzycki J.A."/>
            <person name="Leigh J.A."/>
            <person name="Li W."/>
            <person name="Liu J."/>
            <person name="Mukhopadhyay B."/>
            <person name="Reeve J.N."/>
            <person name="Smith K."/>
            <person name="Springer T.A."/>
            <person name="Umayam L.A."/>
            <person name="White O."/>
            <person name="White R.H."/>
            <person name="de Macario E.C."/>
            <person name="Ferry J.G."/>
            <person name="Jarrell K.F."/>
            <person name="Jing H."/>
            <person name="Macario A.J.L."/>
            <person name="Paulsen I.T."/>
            <person name="Pritchett M."/>
            <person name="Sowers K.R."/>
            <person name="Swanson R.V."/>
            <person name="Zinder S.H."/>
            <person name="Lander E."/>
            <person name="Metcalf W.W."/>
            <person name="Birren B."/>
        </authorList>
    </citation>
    <scope>NUCLEOTIDE SEQUENCE [LARGE SCALE GENOMIC DNA]</scope>
    <source>
        <strain>ATCC 35395 / DSM 2834 / JCM 12185 / C2A</strain>
    </source>
</reference>
<feature type="chain" id="PRO_0000137301" description="Probable translation initiation factor IF-2">
    <location>
        <begin position="1"/>
        <end position="597"/>
    </location>
</feature>
<feature type="domain" description="tr-type G">
    <location>
        <begin position="13"/>
        <end position="229"/>
    </location>
</feature>
<feature type="region of interest" description="G1" evidence="1">
    <location>
        <begin position="22"/>
        <end position="29"/>
    </location>
</feature>
<feature type="region of interest" description="G2" evidence="1">
    <location>
        <begin position="47"/>
        <end position="51"/>
    </location>
</feature>
<feature type="region of interest" description="G3" evidence="1">
    <location>
        <begin position="84"/>
        <end position="87"/>
    </location>
</feature>
<feature type="region of interest" description="G4" evidence="1">
    <location>
        <begin position="138"/>
        <end position="141"/>
    </location>
</feature>
<feature type="region of interest" description="G5" evidence="1">
    <location>
        <begin position="206"/>
        <end position="208"/>
    </location>
</feature>
<feature type="binding site" evidence="2">
    <location>
        <begin position="22"/>
        <end position="29"/>
    </location>
    <ligand>
        <name>GTP</name>
        <dbReference type="ChEBI" id="CHEBI:37565"/>
    </ligand>
</feature>
<feature type="binding site" evidence="2">
    <location>
        <begin position="84"/>
        <end position="88"/>
    </location>
    <ligand>
        <name>GTP</name>
        <dbReference type="ChEBI" id="CHEBI:37565"/>
    </ligand>
</feature>
<feature type="binding site" evidence="2">
    <location>
        <begin position="138"/>
        <end position="141"/>
    </location>
    <ligand>
        <name>GTP</name>
        <dbReference type="ChEBI" id="CHEBI:37565"/>
    </ligand>
</feature>